<protein>
    <recommendedName>
        <fullName>Cellulose synthase-like protein D4</fullName>
        <shortName>AtCslD4</shortName>
        <ecNumber>2.4.1.-</ecNumber>
    </recommendedName>
</protein>
<gene>
    <name type="primary">CSLD4</name>
    <name type="ordered locus">At4g38190</name>
    <name type="ORF">F20D10.310</name>
</gene>
<dbReference type="EC" id="2.4.1.-"/>
<dbReference type="EMBL" id="AL035538">
    <property type="protein sequence ID" value="CAB37559.1"/>
    <property type="molecule type" value="Genomic_DNA"/>
</dbReference>
<dbReference type="EMBL" id="AL161593">
    <property type="protein sequence ID" value="CAB80484.1"/>
    <property type="molecule type" value="Genomic_DNA"/>
</dbReference>
<dbReference type="EMBL" id="CP002687">
    <property type="protein sequence ID" value="AEE86891.1"/>
    <property type="molecule type" value="Genomic_DNA"/>
</dbReference>
<dbReference type="EMBL" id="BT005743">
    <property type="protein sequence ID" value="AAO64152.1"/>
    <property type="molecule type" value="mRNA"/>
</dbReference>
<dbReference type="PIR" id="T05646">
    <property type="entry name" value="T05646"/>
</dbReference>
<dbReference type="RefSeq" id="NP_195532.1">
    <property type="nucleotide sequence ID" value="NM_119980.3"/>
</dbReference>
<dbReference type="SMR" id="Q9SZL9"/>
<dbReference type="FunCoup" id="Q9SZL9">
    <property type="interactions" value="48"/>
</dbReference>
<dbReference type="STRING" id="3702.Q9SZL9"/>
<dbReference type="CAZy" id="GT2">
    <property type="family name" value="Glycosyltransferase Family 2"/>
</dbReference>
<dbReference type="GlyGen" id="Q9SZL9">
    <property type="glycosylation" value="1 site"/>
</dbReference>
<dbReference type="iPTMnet" id="Q9SZL9"/>
<dbReference type="PaxDb" id="3702-AT4G38190.1"/>
<dbReference type="ProteomicsDB" id="220367"/>
<dbReference type="EnsemblPlants" id="AT4G38190.1">
    <property type="protein sequence ID" value="AT4G38190.1"/>
    <property type="gene ID" value="AT4G38190"/>
</dbReference>
<dbReference type="GeneID" id="829975"/>
<dbReference type="Gramene" id="AT4G38190.1">
    <property type="protein sequence ID" value="AT4G38190.1"/>
    <property type="gene ID" value="AT4G38190"/>
</dbReference>
<dbReference type="KEGG" id="ath:AT4G38190"/>
<dbReference type="Araport" id="AT4G38190"/>
<dbReference type="TAIR" id="AT4G38190">
    <property type="gene designation" value="CSLD4"/>
</dbReference>
<dbReference type="eggNOG" id="ENOG502QTM8">
    <property type="taxonomic scope" value="Eukaryota"/>
</dbReference>
<dbReference type="HOGENOM" id="CLU_001418_1_0_1"/>
<dbReference type="InParanoid" id="Q9SZL9"/>
<dbReference type="OMA" id="DPCECHF"/>
<dbReference type="PhylomeDB" id="Q9SZL9"/>
<dbReference type="BioCyc" id="ARA:AT4G38190-MONOMER"/>
<dbReference type="PRO" id="PR:Q9SZL9"/>
<dbReference type="Proteomes" id="UP000006548">
    <property type="component" value="Chromosome 4"/>
</dbReference>
<dbReference type="ExpressionAtlas" id="Q9SZL9">
    <property type="expression patterns" value="baseline and differential"/>
</dbReference>
<dbReference type="GO" id="GO:0005794">
    <property type="term" value="C:Golgi apparatus"/>
    <property type="evidence" value="ECO:0000314"/>
    <property type="project" value="TAIR"/>
</dbReference>
<dbReference type="GO" id="GO:0000139">
    <property type="term" value="C:Golgi membrane"/>
    <property type="evidence" value="ECO:0007669"/>
    <property type="project" value="UniProtKB-SubCell"/>
</dbReference>
<dbReference type="GO" id="GO:0016760">
    <property type="term" value="F:cellulose synthase (UDP-forming) activity"/>
    <property type="evidence" value="ECO:0007669"/>
    <property type="project" value="InterPro"/>
</dbReference>
<dbReference type="GO" id="GO:0071555">
    <property type="term" value="P:cell wall organization"/>
    <property type="evidence" value="ECO:0007669"/>
    <property type="project" value="UniProtKB-KW"/>
</dbReference>
<dbReference type="GO" id="GO:0030244">
    <property type="term" value="P:cellulose biosynthetic process"/>
    <property type="evidence" value="ECO:0007669"/>
    <property type="project" value="InterPro"/>
</dbReference>
<dbReference type="GO" id="GO:0009846">
    <property type="term" value="P:pollen germination"/>
    <property type="evidence" value="ECO:0000315"/>
    <property type="project" value="TAIR"/>
</dbReference>
<dbReference type="FunFam" id="3.30.40.10:FF:000229">
    <property type="entry name" value="Cellulose synthase-like protein D3"/>
    <property type="match status" value="1"/>
</dbReference>
<dbReference type="FunFam" id="3.90.550.10:FF:000089">
    <property type="entry name" value="Cellulose synthase-like protein D4"/>
    <property type="match status" value="1"/>
</dbReference>
<dbReference type="Gene3D" id="3.90.550.10">
    <property type="entry name" value="Spore Coat Polysaccharide Biosynthesis Protein SpsA, Chain A"/>
    <property type="match status" value="1"/>
</dbReference>
<dbReference type="Gene3D" id="3.30.40.10">
    <property type="entry name" value="Zinc/RING finger domain, C3HC4 (zinc finger)"/>
    <property type="match status" value="1"/>
</dbReference>
<dbReference type="InterPro" id="IPR005150">
    <property type="entry name" value="Cellulose_synth"/>
</dbReference>
<dbReference type="InterPro" id="IPR029044">
    <property type="entry name" value="Nucleotide-diphossugar_trans"/>
</dbReference>
<dbReference type="InterPro" id="IPR013083">
    <property type="entry name" value="Znf_RING/FYVE/PHD"/>
</dbReference>
<dbReference type="PANTHER" id="PTHR13301">
    <property type="entry name" value="X-BOX TRANSCRIPTION FACTOR-RELATED"/>
    <property type="match status" value="1"/>
</dbReference>
<dbReference type="Pfam" id="PF03552">
    <property type="entry name" value="Cellulose_synt"/>
    <property type="match status" value="2"/>
</dbReference>
<dbReference type="Pfam" id="PF14570">
    <property type="entry name" value="zf-RING_4"/>
    <property type="match status" value="1"/>
</dbReference>
<dbReference type="SUPFAM" id="SSF53448">
    <property type="entry name" value="Nucleotide-diphospho-sugar transferases"/>
    <property type="match status" value="1"/>
</dbReference>
<dbReference type="SUPFAM" id="SSF57850">
    <property type="entry name" value="RING/U-box"/>
    <property type="match status" value="1"/>
</dbReference>
<accession>Q9SZL9</accession>
<accession>Q84TI9</accession>
<keyword id="KW-0961">Cell wall biogenesis/degradation</keyword>
<keyword id="KW-0328">Glycosyltransferase</keyword>
<keyword id="KW-0333">Golgi apparatus</keyword>
<keyword id="KW-0472">Membrane</keyword>
<keyword id="KW-1185">Reference proteome</keyword>
<keyword id="KW-0808">Transferase</keyword>
<keyword id="KW-0812">Transmembrane</keyword>
<keyword id="KW-1133">Transmembrane helix</keyword>
<proteinExistence type="evidence at transcript level"/>
<name>CSLD4_ARATH</name>
<reference key="1">
    <citation type="journal article" date="1999" name="Nature">
        <title>Sequence and analysis of chromosome 4 of the plant Arabidopsis thaliana.</title>
        <authorList>
            <person name="Mayer K.F.X."/>
            <person name="Schueller C."/>
            <person name="Wambutt R."/>
            <person name="Murphy G."/>
            <person name="Volckaert G."/>
            <person name="Pohl T."/>
            <person name="Duesterhoeft A."/>
            <person name="Stiekema W."/>
            <person name="Entian K.-D."/>
            <person name="Terryn N."/>
            <person name="Harris B."/>
            <person name="Ansorge W."/>
            <person name="Brandt P."/>
            <person name="Grivell L.A."/>
            <person name="Rieger M."/>
            <person name="Weichselgartner M."/>
            <person name="de Simone V."/>
            <person name="Obermaier B."/>
            <person name="Mache R."/>
            <person name="Mueller M."/>
            <person name="Kreis M."/>
            <person name="Delseny M."/>
            <person name="Puigdomenech P."/>
            <person name="Watson M."/>
            <person name="Schmidtheini T."/>
            <person name="Reichert B."/>
            <person name="Portetelle D."/>
            <person name="Perez-Alonso M."/>
            <person name="Boutry M."/>
            <person name="Bancroft I."/>
            <person name="Vos P."/>
            <person name="Hoheisel J."/>
            <person name="Zimmermann W."/>
            <person name="Wedler H."/>
            <person name="Ridley P."/>
            <person name="Langham S.-A."/>
            <person name="McCullagh B."/>
            <person name="Bilham L."/>
            <person name="Robben J."/>
            <person name="van der Schueren J."/>
            <person name="Grymonprez B."/>
            <person name="Chuang Y.-J."/>
            <person name="Vandenbussche F."/>
            <person name="Braeken M."/>
            <person name="Weltjens I."/>
            <person name="Voet M."/>
            <person name="Bastiaens I."/>
            <person name="Aert R."/>
            <person name="Defoor E."/>
            <person name="Weitzenegger T."/>
            <person name="Bothe G."/>
            <person name="Ramsperger U."/>
            <person name="Hilbert H."/>
            <person name="Braun M."/>
            <person name="Holzer E."/>
            <person name="Brandt A."/>
            <person name="Peters S."/>
            <person name="van Staveren M."/>
            <person name="Dirkse W."/>
            <person name="Mooijman P."/>
            <person name="Klein Lankhorst R."/>
            <person name="Rose M."/>
            <person name="Hauf J."/>
            <person name="Koetter P."/>
            <person name="Berneiser S."/>
            <person name="Hempel S."/>
            <person name="Feldpausch M."/>
            <person name="Lamberth S."/>
            <person name="Van den Daele H."/>
            <person name="De Keyser A."/>
            <person name="Buysshaert C."/>
            <person name="Gielen J."/>
            <person name="Villarroel R."/>
            <person name="De Clercq R."/>
            <person name="van Montagu M."/>
            <person name="Rogers J."/>
            <person name="Cronin A."/>
            <person name="Quail M.A."/>
            <person name="Bray-Allen S."/>
            <person name="Clark L."/>
            <person name="Doggett J."/>
            <person name="Hall S."/>
            <person name="Kay M."/>
            <person name="Lennard N."/>
            <person name="McLay K."/>
            <person name="Mayes R."/>
            <person name="Pettett A."/>
            <person name="Rajandream M.A."/>
            <person name="Lyne M."/>
            <person name="Benes V."/>
            <person name="Rechmann S."/>
            <person name="Borkova D."/>
            <person name="Bloecker H."/>
            <person name="Scharfe M."/>
            <person name="Grimm M."/>
            <person name="Loehnert T.-H."/>
            <person name="Dose S."/>
            <person name="de Haan M."/>
            <person name="Maarse A.C."/>
            <person name="Schaefer M."/>
            <person name="Mueller-Auer S."/>
            <person name="Gabel C."/>
            <person name="Fuchs M."/>
            <person name="Fartmann B."/>
            <person name="Granderath K."/>
            <person name="Dauner D."/>
            <person name="Herzl A."/>
            <person name="Neumann S."/>
            <person name="Argiriou A."/>
            <person name="Vitale D."/>
            <person name="Liguori R."/>
            <person name="Piravandi E."/>
            <person name="Massenet O."/>
            <person name="Quigley F."/>
            <person name="Clabauld G."/>
            <person name="Muendlein A."/>
            <person name="Felber R."/>
            <person name="Schnabl S."/>
            <person name="Hiller R."/>
            <person name="Schmidt W."/>
            <person name="Lecharny A."/>
            <person name="Aubourg S."/>
            <person name="Chefdor F."/>
            <person name="Cooke R."/>
            <person name="Berger C."/>
            <person name="Monfort A."/>
            <person name="Casacuberta E."/>
            <person name="Gibbons T."/>
            <person name="Weber N."/>
            <person name="Vandenbol M."/>
            <person name="Bargues M."/>
            <person name="Terol J."/>
            <person name="Torres A."/>
            <person name="Perez-Perez A."/>
            <person name="Purnelle B."/>
            <person name="Bent E."/>
            <person name="Johnson S."/>
            <person name="Tacon D."/>
            <person name="Jesse T."/>
            <person name="Heijnen L."/>
            <person name="Schwarz S."/>
            <person name="Scholler P."/>
            <person name="Heber S."/>
            <person name="Francs P."/>
            <person name="Bielke C."/>
            <person name="Frishman D."/>
            <person name="Haase D."/>
            <person name="Lemcke K."/>
            <person name="Mewes H.-W."/>
            <person name="Stocker S."/>
            <person name="Zaccaria P."/>
            <person name="Bevan M."/>
            <person name="Wilson R.K."/>
            <person name="de la Bastide M."/>
            <person name="Habermann K."/>
            <person name="Parnell L."/>
            <person name="Dedhia N."/>
            <person name="Gnoj L."/>
            <person name="Schutz K."/>
            <person name="Huang E."/>
            <person name="Spiegel L."/>
            <person name="Sekhon M."/>
            <person name="Murray J."/>
            <person name="Sheet P."/>
            <person name="Cordes M."/>
            <person name="Abu-Threideh J."/>
            <person name="Stoneking T."/>
            <person name="Kalicki J."/>
            <person name="Graves T."/>
            <person name="Harmon G."/>
            <person name="Edwards J."/>
            <person name="Latreille P."/>
            <person name="Courtney L."/>
            <person name="Cloud J."/>
            <person name="Abbott A."/>
            <person name="Scott K."/>
            <person name="Johnson D."/>
            <person name="Minx P."/>
            <person name="Bentley D."/>
            <person name="Fulton B."/>
            <person name="Miller N."/>
            <person name="Greco T."/>
            <person name="Kemp K."/>
            <person name="Kramer J."/>
            <person name="Fulton L."/>
            <person name="Mardis E."/>
            <person name="Dante M."/>
            <person name="Pepin K."/>
            <person name="Hillier L.W."/>
            <person name="Nelson J."/>
            <person name="Spieth J."/>
            <person name="Ryan E."/>
            <person name="Andrews S."/>
            <person name="Geisel C."/>
            <person name="Layman D."/>
            <person name="Du H."/>
            <person name="Ali J."/>
            <person name="Berghoff A."/>
            <person name="Jones K."/>
            <person name="Drone K."/>
            <person name="Cotton M."/>
            <person name="Joshu C."/>
            <person name="Antonoiu B."/>
            <person name="Zidanic M."/>
            <person name="Strong C."/>
            <person name="Sun H."/>
            <person name="Lamar B."/>
            <person name="Yordan C."/>
            <person name="Ma P."/>
            <person name="Zhong J."/>
            <person name="Preston R."/>
            <person name="Vil D."/>
            <person name="Shekher M."/>
            <person name="Matero A."/>
            <person name="Shah R."/>
            <person name="Swaby I.K."/>
            <person name="O'Shaughnessy A."/>
            <person name="Rodriguez M."/>
            <person name="Hoffman J."/>
            <person name="Till S."/>
            <person name="Granat S."/>
            <person name="Shohdy N."/>
            <person name="Hasegawa A."/>
            <person name="Hameed A."/>
            <person name="Lodhi M."/>
            <person name="Johnson A."/>
            <person name="Chen E."/>
            <person name="Marra M.A."/>
            <person name="Martienssen R."/>
            <person name="McCombie W.R."/>
        </authorList>
    </citation>
    <scope>NUCLEOTIDE SEQUENCE [LARGE SCALE GENOMIC DNA]</scope>
    <source>
        <strain>cv. Columbia</strain>
    </source>
</reference>
<reference key="2">
    <citation type="journal article" date="2017" name="Plant J.">
        <title>Araport11: a complete reannotation of the Arabidopsis thaliana reference genome.</title>
        <authorList>
            <person name="Cheng C.Y."/>
            <person name="Krishnakumar V."/>
            <person name="Chan A.P."/>
            <person name="Thibaud-Nissen F."/>
            <person name="Schobel S."/>
            <person name="Town C.D."/>
        </authorList>
    </citation>
    <scope>GENOME REANNOTATION</scope>
    <source>
        <strain>cv. Columbia</strain>
    </source>
</reference>
<reference key="3">
    <citation type="journal article" date="2003" name="Science">
        <title>Empirical analysis of transcriptional activity in the Arabidopsis genome.</title>
        <authorList>
            <person name="Yamada K."/>
            <person name="Lim J."/>
            <person name="Dale J.M."/>
            <person name="Chen H."/>
            <person name="Shinn P."/>
            <person name="Palm C.J."/>
            <person name="Southwick A.M."/>
            <person name="Wu H.C."/>
            <person name="Kim C.J."/>
            <person name="Nguyen M."/>
            <person name="Pham P.K."/>
            <person name="Cheuk R.F."/>
            <person name="Karlin-Newmann G."/>
            <person name="Liu S.X."/>
            <person name="Lam B."/>
            <person name="Sakano H."/>
            <person name="Wu T."/>
            <person name="Yu G."/>
            <person name="Miranda M."/>
            <person name="Quach H.L."/>
            <person name="Tripp M."/>
            <person name="Chang C.H."/>
            <person name="Lee J.M."/>
            <person name="Toriumi M.J."/>
            <person name="Chan M.M."/>
            <person name="Tang C.C."/>
            <person name="Onodera C.S."/>
            <person name="Deng J.M."/>
            <person name="Akiyama K."/>
            <person name="Ansari Y."/>
            <person name="Arakawa T."/>
            <person name="Banh J."/>
            <person name="Banno F."/>
            <person name="Bowser L."/>
            <person name="Brooks S.Y."/>
            <person name="Carninci P."/>
            <person name="Chao Q."/>
            <person name="Choy N."/>
            <person name="Enju A."/>
            <person name="Goldsmith A.D."/>
            <person name="Gurjal M."/>
            <person name="Hansen N.F."/>
            <person name="Hayashizaki Y."/>
            <person name="Johnson-Hopson C."/>
            <person name="Hsuan V.W."/>
            <person name="Iida K."/>
            <person name="Karnes M."/>
            <person name="Khan S."/>
            <person name="Koesema E."/>
            <person name="Ishida J."/>
            <person name="Jiang P.X."/>
            <person name="Jones T."/>
            <person name="Kawai J."/>
            <person name="Kamiya A."/>
            <person name="Meyers C."/>
            <person name="Nakajima M."/>
            <person name="Narusaka M."/>
            <person name="Seki M."/>
            <person name="Sakurai T."/>
            <person name="Satou M."/>
            <person name="Tamse R."/>
            <person name="Vaysberg M."/>
            <person name="Wallender E.K."/>
            <person name="Wong C."/>
            <person name="Yamamura Y."/>
            <person name="Yuan S."/>
            <person name="Shinozaki K."/>
            <person name="Davis R.W."/>
            <person name="Theologis A."/>
            <person name="Ecker J.R."/>
        </authorList>
    </citation>
    <scope>NUCLEOTIDE SEQUENCE [LARGE SCALE MRNA] OF 40-1111</scope>
    <source>
        <strain>cv. Columbia</strain>
    </source>
</reference>
<reference key="4">
    <citation type="journal article" date="2000" name="Plant Physiol.">
        <title>The cellulose synthase superfamily.</title>
        <authorList>
            <person name="Richmond T.A."/>
            <person name="Somerville C.R."/>
        </authorList>
    </citation>
    <scope>GENE FAMILY</scope>
    <scope>NOMENCLATURE</scope>
</reference>
<evidence type="ECO:0000255" key="1"/>
<evidence type="ECO:0000256" key="2">
    <source>
        <dbReference type="SAM" id="MobiDB-lite"/>
    </source>
</evidence>
<evidence type="ECO:0000305" key="3"/>
<feature type="chain" id="PRO_0000319349" description="Cellulose synthase-like protein D4">
    <location>
        <begin position="1"/>
        <end position="1111"/>
    </location>
</feature>
<feature type="transmembrane region" description="Helical" evidence="1">
    <location>
        <begin position="266"/>
        <end position="286"/>
    </location>
</feature>
<feature type="transmembrane region" description="Helical" evidence="1">
    <location>
        <begin position="297"/>
        <end position="317"/>
    </location>
</feature>
<feature type="transmembrane region" description="Helical" evidence="1">
    <location>
        <begin position="891"/>
        <end position="911"/>
    </location>
</feature>
<feature type="transmembrane region" description="Helical" evidence="1">
    <location>
        <begin position="914"/>
        <end position="934"/>
    </location>
</feature>
<feature type="transmembrane region" description="Helical" evidence="1">
    <location>
        <begin position="963"/>
        <end position="983"/>
    </location>
</feature>
<feature type="transmembrane region" description="Helical" evidence="1">
    <location>
        <begin position="1007"/>
        <end position="1027"/>
    </location>
</feature>
<feature type="transmembrane region" description="Helical" evidence="1">
    <location>
        <begin position="1040"/>
        <end position="1060"/>
    </location>
</feature>
<feature type="transmembrane region" description="Helical" evidence="1">
    <location>
        <begin position="1070"/>
        <end position="1090"/>
    </location>
</feature>
<feature type="region of interest" description="Disordered" evidence="2">
    <location>
        <begin position="1"/>
        <end position="26"/>
    </location>
</feature>
<feature type="region of interest" description="Disordered" evidence="2">
    <location>
        <begin position="175"/>
        <end position="202"/>
    </location>
</feature>
<feature type="compositionally biased region" description="Polar residues" evidence="2">
    <location>
        <begin position="192"/>
        <end position="202"/>
    </location>
</feature>
<feature type="active site" evidence="1">
    <location>
        <position position="397"/>
    </location>
</feature>
<feature type="active site" evidence="1">
    <location>
        <position position="809"/>
    </location>
</feature>
<comment type="function">
    <text>Thought to be a Golgi-localized beta-glycan synthase that polymerize the backbones of noncellulosic polysaccharides (hemicelluloses) of plant cell wall.</text>
</comment>
<comment type="subcellular location">
    <subcellularLocation>
        <location evidence="3">Golgi apparatus membrane</location>
        <topology evidence="3">Multi-pass membrane protein</topology>
    </subcellularLocation>
</comment>
<comment type="similarity">
    <text evidence="3">Belongs to the glycosyltransferase 2 family. Plant cellulose synthase-like D subfamily.</text>
</comment>
<sequence length="1111" mass="124595">MASTPPQTSKKVRNNSGSGQTVKFARRTSSGRYVSLSRDNIELSGELSGDYSNYTVHIPPTPDNQPMATKAEEQYVSNSLFTGGFNSVTRAHLMDKVIDSDVTHPQMAGAKGSSCAMPACDGNVMKDERGKDVMPCECRFKICRDCFMDAQKETGLCPGCKEQYKIGDLDDDTPDYSSGALPLPAPGKDQRGNNNNMSMMKRNQNGEFDHNRWLFETQGTYGYGNAYWPQDEMYGDDMDEGMRGGMVETADKPWRPLSRRIPIPAAIISPYRLLIVIRFVVLCFFLTWRIRNPNEDAIWLWLMSIICELWFGFSWILDQIPKLCPINRSTDLEVLRDKFDMPSPSNPTGRSDLPGIDLFVSTADPEKEPPLVTANTILSILAVDYPVEKVSCYLSDDGGALLSFEAMAEAASFADLWVPFCRKHNIEPRNPDSYFSLKIDPTKNKSRIDFVKDRRKIKREYDEFKVRINGLPDSIRRRSDAFNAREEMKALKQMRESGGDPTEPVKVPKATWMADGTHWPGTWAASTREHSKGDHAGILQVMLKPPSSDPLIGNSDDKVIDFSDTDTRLPMFVYVSREKRPGYDHNKKAGAMNALVRASAILSNGPFILNLDCDHYIYNCKAVREGMCFMMDRGGEDICYIQFPQRFEGIDPSDRYANNNTVFFDGNMRALDGVQGPVYVGTGTMFRRFALYGFDPPNPDKLLEKKESETEALTTSDFDPDLDVTQLPKRFGNSTLLAESIPIAEFQGRPLADHPAVKYGRPPGALRVPRDPLDATTVAESVSVISCWYEDKTEWGDRVGWIYGSVTEDVVTGYRMHNRGWRSVYCITKRDSFRGSAPINLTDRLHQVLRWATGSVEIFFSRNNAILASKRLKFLQRLAYLNVGIYPFTSLFLILYCFLPAFSLFSGQFIVRTLSISFLVYLLMITICLIGLAVLEVKWSGIGLEEWWRNEQWWLISGTSSHLYAVVQGVLKVIAGIEISFTLTTKSGGDDNEDIYADLYIVKWSSLMIPPIVIAMVNIIAIVVAFIRTIYQAVPQWSKLIGGAFFSFWVLAHLYPFAKGLMGRRGKTPTIVFVWAGLIAITISLLWTAINPNTGPAAAAEGVGGGGFQFP</sequence>
<organism>
    <name type="scientific">Arabidopsis thaliana</name>
    <name type="common">Mouse-ear cress</name>
    <dbReference type="NCBI Taxonomy" id="3702"/>
    <lineage>
        <taxon>Eukaryota</taxon>
        <taxon>Viridiplantae</taxon>
        <taxon>Streptophyta</taxon>
        <taxon>Embryophyta</taxon>
        <taxon>Tracheophyta</taxon>
        <taxon>Spermatophyta</taxon>
        <taxon>Magnoliopsida</taxon>
        <taxon>eudicotyledons</taxon>
        <taxon>Gunneridae</taxon>
        <taxon>Pentapetalae</taxon>
        <taxon>rosids</taxon>
        <taxon>malvids</taxon>
        <taxon>Brassicales</taxon>
        <taxon>Brassicaceae</taxon>
        <taxon>Camelineae</taxon>
        <taxon>Arabidopsis</taxon>
    </lineage>
</organism>